<organism>
    <name type="scientific">Ehrlichia chaffeensis (strain ATCC CRL-10679 / Arkansas)</name>
    <dbReference type="NCBI Taxonomy" id="205920"/>
    <lineage>
        <taxon>Bacteria</taxon>
        <taxon>Pseudomonadati</taxon>
        <taxon>Pseudomonadota</taxon>
        <taxon>Alphaproteobacteria</taxon>
        <taxon>Rickettsiales</taxon>
        <taxon>Anaplasmataceae</taxon>
        <taxon>Ehrlichia</taxon>
    </lineage>
</organism>
<protein>
    <recommendedName>
        <fullName evidence="1">Ribosomal RNA small subunit methyltransferase A</fullName>
        <ecNumber evidence="1">2.1.1.182</ecNumber>
    </recommendedName>
    <alternativeName>
        <fullName evidence="1">16S rRNA (adenine(1518)-N(6)/adenine(1519)-N(6))-dimethyltransferase</fullName>
    </alternativeName>
    <alternativeName>
        <fullName evidence="1">16S rRNA dimethyladenosine transferase</fullName>
    </alternativeName>
    <alternativeName>
        <fullName evidence="1">16S rRNA dimethylase</fullName>
    </alternativeName>
    <alternativeName>
        <fullName evidence="1">S-adenosylmethionine-6-N', N'-adenosyl(rRNA) dimethyltransferase</fullName>
    </alternativeName>
</protein>
<proteinExistence type="inferred from homology"/>
<comment type="function">
    <text evidence="1">Specifically dimethylates two adjacent adenosines (A1518 and A1519) in the loop of a conserved hairpin near the 3'-end of 16S rRNA in the 30S particle. May play a critical role in biogenesis of 30S subunits.</text>
</comment>
<comment type="catalytic activity">
    <reaction evidence="1">
        <text>adenosine(1518)/adenosine(1519) in 16S rRNA + 4 S-adenosyl-L-methionine = N(6)-dimethyladenosine(1518)/N(6)-dimethyladenosine(1519) in 16S rRNA + 4 S-adenosyl-L-homocysteine + 4 H(+)</text>
        <dbReference type="Rhea" id="RHEA:19609"/>
        <dbReference type="Rhea" id="RHEA-COMP:10232"/>
        <dbReference type="Rhea" id="RHEA-COMP:10233"/>
        <dbReference type="ChEBI" id="CHEBI:15378"/>
        <dbReference type="ChEBI" id="CHEBI:57856"/>
        <dbReference type="ChEBI" id="CHEBI:59789"/>
        <dbReference type="ChEBI" id="CHEBI:74411"/>
        <dbReference type="ChEBI" id="CHEBI:74493"/>
        <dbReference type="EC" id="2.1.1.182"/>
    </reaction>
</comment>
<comment type="subcellular location">
    <subcellularLocation>
        <location evidence="1">Cytoplasm</location>
    </subcellularLocation>
</comment>
<comment type="similarity">
    <text evidence="1">Belongs to the class I-like SAM-binding methyltransferase superfamily. rRNA adenine N(6)-methyltransferase family. RsmA subfamily.</text>
</comment>
<comment type="sequence caution" evidence="2">
    <conflict type="erroneous initiation">
        <sequence resource="EMBL-CDS" id="ABD45262"/>
    </conflict>
</comment>
<sequence>MNHISKINPKKELSQCFISSTHITDQIVNYAGNISDYSIIEIGPGLGTMTYSILNKNPKKLISIEKDRRLSTIHEKIVEEFQGKYEFILSDALNIDLRDIIEPPVKVIANLPYHIATTLLIKWMDYINFFTSFTLMFQKEVADRIVAQPNNKNYGTLSILIQLLSNVYKMEDFGPEIFSPQPKVMSSVINIIALPEPRFHVNYRKLSQVLKTTFSERRKMIRSTLKKLTNNADEMLESLNIDNNLRPENLSIEQFCQITNCIN</sequence>
<keyword id="KW-0963">Cytoplasm</keyword>
<keyword id="KW-0489">Methyltransferase</keyword>
<keyword id="KW-1185">Reference proteome</keyword>
<keyword id="KW-0694">RNA-binding</keyword>
<keyword id="KW-0698">rRNA processing</keyword>
<keyword id="KW-0949">S-adenosyl-L-methionine</keyword>
<keyword id="KW-0808">Transferase</keyword>
<reference key="1">
    <citation type="journal article" date="2006" name="PLoS Genet.">
        <title>Comparative genomics of emerging human ehrlichiosis agents.</title>
        <authorList>
            <person name="Dunning Hotopp J.C."/>
            <person name="Lin M."/>
            <person name="Madupu R."/>
            <person name="Crabtree J."/>
            <person name="Angiuoli S.V."/>
            <person name="Eisen J.A."/>
            <person name="Seshadri R."/>
            <person name="Ren Q."/>
            <person name="Wu M."/>
            <person name="Utterback T.R."/>
            <person name="Smith S."/>
            <person name="Lewis M."/>
            <person name="Khouri H."/>
            <person name="Zhang C."/>
            <person name="Niu H."/>
            <person name="Lin Q."/>
            <person name="Ohashi N."/>
            <person name="Zhi N."/>
            <person name="Nelson W.C."/>
            <person name="Brinkac L.M."/>
            <person name="Dodson R.J."/>
            <person name="Rosovitz M.J."/>
            <person name="Sundaram J.P."/>
            <person name="Daugherty S.C."/>
            <person name="Davidsen T."/>
            <person name="Durkin A.S."/>
            <person name="Gwinn M.L."/>
            <person name="Haft D.H."/>
            <person name="Selengut J.D."/>
            <person name="Sullivan S.A."/>
            <person name="Zafar N."/>
            <person name="Zhou L."/>
            <person name="Benahmed F."/>
            <person name="Forberger H."/>
            <person name="Halpin R."/>
            <person name="Mulligan S."/>
            <person name="Robinson J."/>
            <person name="White O."/>
            <person name="Rikihisa Y."/>
            <person name="Tettelin H."/>
        </authorList>
    </citation>
    <scope>NUCLEOTIDE SEQUENCE [LARGE SCALE GENOMIC DNA]</scope>
    <source>
        <strain>ATCC CRL-10679 / Arkansas</strain>
    </source>
</reference>
<accession>Q2GGH6</accession>
<dbReference type="EC" id="2.1.1.182" evidence="1"/>
<dbReference type="EMBL" id="CP000236">
    <property type="protein sequence ID" value="ABD45262.1"/>
    <property type="status" value="ALT_INIT"/>
    <property type="molecule type" value="Genomic_DNA"/>
</dbReference>
<dbReference type="RefSeq" id="WP_193327828.1">
    <property type="nucleotide sequence ID" value="NC_007799.1"/>
</dbReference>
<dbReference type="SMR" id="Q2GGH6"/>
<dbReference type="STRING" id="205920.ECH_0648"/>
<dbReference type="KEGG" id="ech:ECH_0648"/>
<dbReference type="eggNOG" id="COG0030">
    <property type="taxonomic scope" value="Bacteria"/>
</dbReference>
<dbReference type="HOGENOM" id="CLU_041220_0_1_5"/>
<dbReference type="Proteomes" id="UP000008320">
    <property type="component" value="Chromosome"/>
</dbReference>
<dbReference type="GO" id="GO:0005829">
    <property type="term" value="C:cytosol"/>
    <property type="evidence" value="ECO:0007669"/>
    <property type="project" value="TreeGrafter"/>
</dbReference>
<dbReference type="GO" id="GO:0052908">
    <property type="term" value="F:16S rRNA (adenine(1518)-N(6)/adenine(1519)-N(6))-dimethyltransferase activity"/>
    <property type="evidence" value="ECO:0007669"/>
    <property type="project" value="UniProtKB-EC"/>
</dbReference>
<dbReference type="GO" id="GO:0003723">
    <property type="term" value="F:RNA binding"/>
    <property type="evidence" value="ECO:0007669"/>
    <property type="project" value="UniProtKB-KW"/>
</dbReference>
<dbReference type="CDD" id="cd02440">
    <property type="entry name" value="AdoMet_MTases"/>
    <property type="match status" value="1"/>
</dbReference>
<dbReference type="FunFam" id="1.10.8.100:FF:000001">
    <property type="entry name" value="Ribosomal RNA small subunit methyltransferase A"/>
    <property type="match status" value="1"/>
</dbReference>
<dbReference type="Gene3D" id="1.10.8.100">
    <property type="entry name" value="Ribosomal RNA adenine dimethylase-like, domain 2"/>
    <property type="match status" value="1"/>
</dbReference>
<dbReference type="Gene3D" id="3.40.50.150">
    <property type="entry name" value="Vaccinia Virus protein VP39"/>
    <property type="match status" value="1"/>
</dbReference>
<dbReference type="HAMAP" id="MF_00607">
    <property type="entry name" value="16SrRNA_methyltr_A"/>
    <property type="match status" value="1"/>
</dbReference>
<dbReference type="InterPro" id="IPR001737">
    <property type="entry name" value="KsgA/Erm"/>
</dbReference>
<dbReference type="InterPro" id="IPR023165">
    <property type="entry name" value="rRNA_Ade_diMease-like_C"/>
</dbReference>
<dbReference type="InterPro" id="IPR020596">
    <property type="entry name" value="rRNA_Ade_Mease_Trfase_CS"/>
</dbReference>
<dbReference type="InterPro" id="IPR020598">
    <property type="entry name" value="rRNA_Ade_methylase_Trfase_N"/>
</dbReference>
<dbReference type="InterPro" id="IPR011530">
    <property type="entry name" value="rRNA_adenine_dimethylase"/>
</dbReference>
<dbReference type="InterPro" id="IPR029063">
    <property type="entry name" value="SAM-dependent_MTases_sf"/>
</dbReference>
<dbReference type="NCBIfam" id="TIGR00755">
    <property type="entry name" value="ksgA"/>
    <property type="match status" value="1"/>
</dbReference>
<dbReference type="PANTHER" id="PTHR11727">
    <property type="entry name" value="DIMETHYLADENOSINE TRANSFERASE"/>
    <property type="match status" value="1"/>
</dbReference>
<dbReference type="PANTHER" id="PTHR11727:SF7">
    <property type="entry name" value="DIMETHYLADENOSINE TRANSFERASE-RELATED"/>
    <property type="match status" value="1"/>
</dbReference>
<dbReference type="Pfam" id="PF00398">
    <property type="entry name" value="RrnaAD"/>
    <property type="match status" value="1"/>
</dbReference>
<dbReference type="SMART" id="SM00650">
    <property type="entry name" value="rADc"/>
    <property type="match status" value="1"/>
</dbReference>
<dbReference type="SUPFAM" id="SSF53335">
    <property type="entry name" value="S-adenosyl-L-methionine-dependent methyltransferases"/>
    <property type="match status" value="1"/>
</dbReference>
<dbReference type="PROSITE" id="PS01131">
    <property type="entry name" value="RRNA_A_DIMETH"/>
    <property type="match status" value="1"/>
</dbReference>
<dbReference type="PROSITE" id="PS51689">
    <property type="entry name" value="SAM_RNA_A_N6_MT"/>
    <property type="match status" value="1"/>
</dbReference>
<evidence type="ECO:0000255" key="1">
    <source>
        <dbReference type="HAMAP-Rule" id="MF_00607"/>
    </source>
</evidence>
<evidence type="ECO:0000305" key="2"/>
<name>RSMA_EHRCR</name>
<gene>
    <name evidence="1" type="primary">rsmA</name>
    <name evidence="1" type="synonym">ksgA</name>
    <name type="ordered locus">ECH_0648</name>
</gene>
<feature type="chain" id="PRO_0000257289" description="Ribosomal RNA small subunit methyltransferase A">
    <location>
        <begin position="1"/>
        <end position="263"/>
    </location>
</feature>
<feature type="binding site" evidence="1">
    <location>
        <position position="18"/>
    </location>
    <ligand>
        <name>S-adenosyl-L-methionine</name>
        <dbReference type="ChEBI" id="CHEBI:59789"/>
    </ligand>
</feature>
<feature type="binding site" evidence="1">
    <location>
        <position position="43"/>
    </location>
    <ligand>
        <name>S-adenosyl-L-methionine</name>
        <dbReference type="ChEBI" id="CHEBI:59789"/>
    </ligand>
</feature>
<feature type="binding site" evidence="1">
    <location>
        <position position="65"/>
    </location>
    <ligand>
        <name>S-adenosyl-L-methionine</name>
        <dbReference type="ChEBI" id="CHEBI:59789"/>
    </ligand>
</feature>
<feature type="binding site" evidence="1">
    <location>
        <position position="91"/>
    </location>
    <ligand>
        <name>S-adenosyl-L-methionine</name>
        <dbReference type="ChEBI" id="CHEBI:59789"/>
    </ligand>
</feature>
<feature type="binding site" evidence="1">
    <location>
        <position position="110"/>
    </location>
    <ligand>
        <name>S-adenosyl-L-methionine</name>
        <dbReference type="ChEBI" id="CHEBI:59789"/>
    </ligand>
</feature>